<accession>A4JA33</accession>
<comment type="function">
    <text evidence="1">Produces ATP from ADP in the presence of a proton gradient across the membrane. The alpha chain is a regulatory subunit.</text>
</comment>
<comment type="catalytic activity">
    <reaction evidence="1">
        <text>ATP + H2O + 4 H(+)(in) = ADP + phosphate + 5 H(+)(out)</text>
        <dbReference type="Rhea" id="RHEA:57720"/>
        <dbReference type="ChEBI" id="CHEBI:15377"/>
        <dbReference type="ChEBI" id="CHEBI:15378"/>
        <dbReference type="ChEBI" id="CHEBI:30616"/>
        <dbReference type="ChEBI" id="CHEBI:43474"/>
        <dbReference type="ChEBI" id="CHEBI:456216"/>
        <dbReference type="EC" id="7.1.2.2"/>
    </reaction>
</comment>
<comment type="subunit">
    <text evidence="1">F-type ATPases have 2 components, CF(1) - the catalytic core - and CF(0) - the membrane proton channel. CF(1) has five subunits: alpha(3), beta(3), gamma(1), delta(1), epsilon(1). CF(0) has three main subunits: a(1), b(2) and c(9-12). The alpha and beta chains form an alternating ring which encloses part of the gamma chain. CF(1) is attached to CF(0) by a central stalk formed by the gamma and epsilon chains, while a peripheral stalk is formed by the delta and b chains.</text>
</comment>
<comment type="subcellular location">
    <subcellularLocation>
        <location evidence="1">Cell inner membrane</location>
        <topology evidence="1">Peripheral membrane protein</topology>
    </subcellularLocation>
</comment>
<comment type="similarity">
    <text evidence="1">Belongs to the ATPase alpha/beta chains family.</text>
</comment>
<keyword id="KW-0066">ATP synthesis</keyword>
<keyword id="KW-0067">ATP-binding</keyword>
<keyword id="KW-0997">Cell inner membrane</keyword>
<keyword id="KW-1003">Cell membrane</keyword>
<keyword id="KW-0139">CF(1)</keyword>
<keyword id="KW-0375">Hydrogen ion transport</keyword>
<keyword id="KW-0406">Ion transport</keyword>
<keyword id="KW-0472">Membrane</keyword>
<keyword id="KW-0547">Nucleotide-binding</keyword>
<keyword id="KW-1278">Translocase</keyword>
<keyword id="KW-0813">Transport</keyword>
<protein>
    <recommendedName>
        <fullName evidence="1">ATP synthase subunit alpha</fullName>
        <ecNumber evidence="1">7.1.2.2</ecNumber>
    </recommendedName>
    <alternativeName>
        <fullName evidence="1">ATP synthase F1 sector subunit alpha</fullName>
    </alternativeName>
    <alternativeName>
        <fullName evidence="1">F-ATPase subunit alpha</fullName>
    </alternativeName>
</protein>
<organism>
    <name type="scientific">Burkholderia vietnamiensis (strain G4 / LMG 22486)</name>
    <name type="common">Burkholderia cepacia (strain R1808)</name>
    <dbReference type="NCBI Taxonomy" id="269482"/>
    <lineage>
        <taxon>Bacteria</taxon>
        <taxon>Pseudomonadati</taxon>
        <taxon>Pseudomonadota</taxon>
        <taxon>Betaproteobacteria</taxon>
        <taxon>Burkholderiales</taxon>
        <taxon>Burkholderiaceae</taxon>
        <taxon>Burkholderia</taxon>
        <taxon>Burkholderia cepacia complex</taxon>
    </lineage>
</organism>
<gene>
    <name evidence="1" type="primary">atpA</name>
    <name type="ordered locus">Bcep1808_0113</name>
</gene>
<dbReference type="EC" id="7.1.2.2" evidence="1"/>
<dbReference type="EMBL" id="CP000614">
    <property type="protein sequence ID" value="ABO53136.1"/>
    <property type="molecule type" value="Genomic_DNA"/>
</dbReference>
<dbReference type="SMR" id="A4JA33"/>
<dbReference type="KEGG" id="bvi:Bcep1808_0113"/>
<dbReference type="eggNOG" id="COG0056">
    <property type="taxonomic scope" value="Bacteria"/>
</dbReference>
<dbReference type="HOGENOM" id="CLU_010091_2_1_4"/>
<dbReference type="Proteomes" id="UP000002287">
    <property type="component" value="Chromosome 1"/>
</dbReference>
<dbReference type="GO" id="GO:0005886">
    <property type="term" value="C:plasma membrane"/>
    <property type="evidence" value="ECO:0007669"/>
    <property type="project" value="UniProtKB-SubCell"/>
</dbReference>
<dbReference type="GO" id="GO:0045259">
    <property type="term" value="C:proton-transporting ATP synthase complex"/>
    <property type="evidence" value="ECO:0007669"/>
    <property type="project" value="UniProtKB-KW"/>
</dbReference>
<dbReference type="GO" id="GO:0043531">
    <property type="term" value="F:ADP binding"/>
    <property type="evidence" value="ECO:0007669"/>
    <property type="project" value="TreeGrafter"/>
</dbReference>
<dbReference type="GO" id="GO:0005524">
    <property type="term" value="F:ATP binding"/>
    <property type="evidence" value="ECO:0007669"/>
    <property type="project" value="UniProtKB-UniRule"/>
</dbReference>
<dbReference type="GO" id="GO:0046933">
    <property type="term" value="F:proton-transporting ATP synthase activity, rotational mechanism"/>
    <property type="evidence" value="ECO:0007669"/>
    <property type="project" value="UniProtKB-UniRule"/>
</dbReference>
<dbReference type="CDD" id="cd18113">
    <property type="entry name" value="ATP-synt_F1_alpha_C"/>
    <property type="match status" value="1"/>
</dbReference>
<dbReference type="CDD" id="cd18116">
    <property type="entry name" value="ATP-synt_F1_alpha_N"/>
    <property type="match status" value="1"/>
</dbReference>
<dbReference type="CDD" id="cd01132">
    <property type="entry name" value="F1-ATPase_alpha_CD"/>
    <property type="match status" value="1"/>
</dbReference>
<dbReference type="FunFam" id="1.20.150.20:FF:000001">
    <property type="entry name" value="ATP synthase subunit alpha"/>
    <property type="match status" value="1"/>
</dbReference>
<dbReference type="FunFam" id="2.40.30.20:FF:000001">
    <property type="entry name" value="ATP synthase subunit alpha"/>
    <property type="match status" value="1"/>
</dbReference>
<dbReference type="FunFam" id="3.40.50.300:FF:000002">
    <property type="entry name" value="ATP synthase subunit alpha"/>
    <property type="match status" value="1"/>
</dbReference>
<dbReference type="Gene3D" id="2.40.30.20">
    <property type="match status" value="1"/>
</dbReference>
<dbReference type="Gene3D" id="1.20.150.20">
    <property type="entry name" value="ATP synthase alpha/beta chain, C-terminal domain"/>
    <property type="match status" value="1"/>
</dbReference>
<dbReference type="Gene3D" id="3.40.50.300">
    <property type="entry name" value="P-loop containing nucleotide triphosphate hydrolases"/>
    <property type="match status" value="1"/>
</dbReference>
<dbReference type="HAMAP" id="MF_01346">
    <property type="entry name" value="ATP_synth_alpha_bact"/>
    <property type="match status" value="1"/>
</dbReference>
<dbReference type="InterPro" id="IPR023366">
    <property type="entry name" value="ATP_synth_asu-like_sf"/>
</dbReference>
<dbReference type="InterPro" id="IPR000793">
    <property type="entry name" value="ATP_synth_asu_C"/>
</dbReference>
<dbReference type="InterPro" id="IPR038376">
    <property type="entry name" value="ATP_synth_asu_C_sf"/>
</dbReference>
<dbReference type="InterPro" id="IPR033732">
    <property type="entry name" value="ATP_synth_F1_a_nt-bd_dom"/>
</dbReference>
<dbReference type="InterPro" id="IPR005294">
    <property type="entry name" value="ATP_synth_F1_asu"/>
</dbReference>
<dbReference type="InterPro" id="IPR020003">
    <property type="entry name" value="ATPase_a/bsu_AS"/>
</dbReference>
<dbReference type="InterPro" id="IPR004100">
    <property type="entry name" value="ATPase_F1/V1/A1_a/bsu_N"/>
</dbReference>
<dbReference type="InterPro" id="IPR036121">
    <property type="entry name" value="ATPase_F1/V1/A1_a/bsu_N_sf"/>
</dbReference>
<dbReference type="InterPro" id="IPR000194">
    <property type="entry name" value="ATPase_F1/V1/A1_a/bsu_nucl-bd"/>
</dbReference>
<dbReference type="InterPro" id="IPR027417">
    <property type="entry name" value="P-loop_NTPase"/>
</dbReference>
<dbReference type="NCBIfam" id="TIGR00962">
    <property type="entry name" value="atpA"/>
    <property type="match status" value="1"/>
</dbReference>
<dbReference type="NCBIfam" id="NF009884">
    <property type="entry name" value="PRK13343.1"/>
    <property type="match status" value="1"/>
</dbReference>
<dbReference type="PANTHER" id="PTHR48082">
    <property type="entry name" value="ATP SYNTHASE SUBUNIT ALPHA, MITOCHONDRIAL"/>
    <property type="match status" value="1"/>
</dbReference>
<dbReference type="PANTHER" id="PTHR48082:SF2">
    <property type="entry name" value="ATP SYNTHASE SUBUNIT ALPHA, MITOCHONDRIAL"/>
    <property type="match status" value="1"/>
</dbReference>
<dbReference type="Pfam" id="PF00006">
    <property type="entry name" value="ATP-synt_ab"/>
    <property type="match status" value="1"/>
</dbReference>
<dbReference type="Pfam" id="PF00306">
    <property type="entry name" value="ATP-synt_ab_C"/>
    <property type="match status" value="1"/>
</dbReference>
<dbReference type="Pfam" id="PF02874">
    <property type="entry name" value="ATP-synt_ab_N"/>
    <property type="match status" value="1"/>
</dbReference>
<dbReference type="PIRSF" id="PIRSF039088">
    <property type="entry name" value="F_ATPase_subunit_alpha"/>
    <property type="match status" value="1"/>
</dbReference>
<dbReference type="SUPFAM" id="SSF47917">
    <property type="entry name" value="C-terminal domain of alpha and beta subunits of F1 ATP synthase"/>
    <property type="match status" value="1"/>
</dbReference>
<dbReference type="SUPFAM" id="SSF50615">
    <property type="entry name" value="N-terminal domain of alpha and beta subunits of F1 ATP synthase"/>
    <property type="match status" value="1"/>
</dbReference>
<dbReference type="SUPFAM" id="SSF52540">
    <property type="entry name" value="P-loop containing nucleoside triphosphate hydrolases"/>
    <property type="match status" value="1"/>
</dbReference>
<dbReference type="PROSITE" id="PS00152">
    <property type="entry name" value="ATPASE_ALPHA_BETA"/>
    <property type="match status" value="1"/>
</dbReference>
<proteinExistence type="inferred from homology"/>
<feature type="chain" id="PRO_1000055055" description="ATP synthase subunit alpha">
    <location>
        <begin position="1"/>
        <end position="513"/>
    </location>
</feature>
<feature type="binding site" evidence="1">
    <location>
        <begin position="169"/>
        <end position="176"/>
    </location>
    <ligand>
        <name>ATP</name>
        <dbReference type="ChEBI" id="CHEBI:30616"/>
    </ligand>
</feature>
<feature type="site" description="Required for activity" evidence="1">
    <location>
        <position position="373"/>
    </location>
</feature>
<evidence type="ECO:0000255" key="1">
    <source>
        <dbReference type="HAMAP-Rule" id="MF_01346"/>
    </source>
</evidence>
<sequence length="513" mass="55758">MQLNPSEISELIKSRIQGLEASADVRNQGTVISVTDGIVRIHGLSDVMQGEMLEFPGNTFGLALNLERDSVGAVILGEYEHISEGDVVKTTGRILEVPVGPELVGRVVDALGNPIDGKGPVNAKLTDAIEKIAPGVIWRKSVSQPVQTGIKSIDAMVPIGRGQRELIIGDRQCGKTAVALDAIINQKGKDLICIYVAIGQKASSIMNVVRKLEETGAMEYTIVVAASASDSAAMQYLAPYAGCTMGEYFRDRGQDALIIYDDLTKQAWAYRQISLLLRRPPGREAYPGDVFYLHSRLLERAARVSEEYVEKFTNGEVKGKSGSLTALPVIETQAGDVTAFVPTNVISITDGQIFLETDLFNAGIRPAINAGVSVSRVGGAAQTKVVKKLSGGIRTDLAQYRELAAFAQFASDLDEATRKQLERGRRVTELLKQPQYQPLQVWELAVSLYAANNGYLDDLDVKQVLSFEKGLRDNLKTSHADLIKRIEDTKDLSKDDEGALRAAIESFKKSGAY</sequence>
<name>ATPA_BURVG</name>
<reference key="1">
    <citation type="submission" date="2007-03" db="EMBL/GenBank/DDBJ databases">
        <title>Complete sequence of chromosome 1 of Burkholderia vietnamiensis G4.</title>
        <authorList>
            <consortium name="US DOE Joint Genome Institute"/>
            <person name="Copeland A."/>
            <person name="Lucas S."/>
            <person name="Lapidus A."/>
            <person name="Barry K."/>
            <person name="Detter J.C."/>
            <person name="Glavina del Rio T."/>
            <person name="Hammon N."/>
            <person name="Israni S."/>
            <person name="Dalin E."/>
            <person name="Tice H."/>
            <person name="Pitluck S."/>
            <person name="Chain P."/>
            <person name="Malfatti S."/>
            <person name="Shin M."/>
            <person name="Vergez L."/>
            <person name="Schmutz J."/>
            <person name="Larimer F."/>
            <person name="Land M."/>
            <person name="Hauser L."/>
            <person name="Kyrpides N."/>
            <person name="Tiedje J."/>
            <person name="Richardson P."/>
        </authorList>
    </citation>
    <scope>NUCLEOTIDE SEQUENCE [LARGE SCALE GENOMIC DNA]</scope>
    <source>
        <strain>G4 / LMG 22486</strain>
    </source>
</reference>